<reference key="1">
    <citation type="journal article" date="2007" name="Nat. Genet.">
        <title>Genomic analysis of Bartonella identifies type IV secretion systems as host adaptability factors.</title>
        <authorList>
            <person name="Saenz H.L."/>
            <person name="Engel P."/>
            <person name="Stoeckli M.C."/>
            <person name="Lanz C."/>
            <person name="Raddatz G."/>
            <person name="Vayssier-Taussat M."/>
            <person name="Birtles R."/>
            <person name="Schuster S.C."/>
            <person name="Dehio C."/>
        </authorList>
    </citation>
    <scope>NUCLEOTIDE SEQUENCE [LARGE SCALE GENOMIC DNA]</scope>
    <source>
        <strain>CIP 105476 / IBS 506</strain>
    </source>
</reference>
<feature type="chain" id="PRO_1000082795" description="Ribosomal RNA large subunit methyltransferase H">
    <location>
        <begin position="1"/>
        <end position="160"/>
    </location>
</feature>
<feature type="binding site" evidence="1">
    <location>
        <position position="76"/>
    </location>
    <ligand>
        <name>S-adenosyl-L-methionine</name>
        <dbReference type="ChEBI" id="CHEBI:59789"/>
    </ligand>
</feature>
<feature type="binding site" evidence="1">
    <location>
        <position position="108"/>
    </location>
    <ligand>
        <name>S-adenosyl-L-methionine</name>
        <dbReference type="ChEBI" id="CHEBI:59789"/>
    </ligand>
</feature>
<feature type="binding site" evidence="1">
    <location>
        <begin position="127"/>
        <end position="132"/>
    </location>
    <ligand>
        <name>S-adenosyl-L-methionine</name>
        <dbReference type="ChEBI" id="CHEBI:59789"/>
    </ligand>
</feature>
<protein>
    <recommendedName>
        <fullName evidence="1">Ribosomal RNA large subunit methyltransferase H</fullName>
        <ecNumber evidence="1">2.1.1.177</ecNumber>
    </recommendedName>
    <alternativeName>
        <fullName evidence="1">23S rRNA (pseudouridine1915-N3)-methyltransferase</fullName>
    </alternativeName>
    <alternativeName>
        <fullName evidence="1">23S rRNA m3Psi1915 methyltransferase</fullName>
    </alternativeName>
    <alternativeName>
        <fullName evidence="1">rRNA (pseudouridine-N3-)-methyltransferase RlmH</fullName>
    </alternativeName>
</protein>
<gene>
    <name evidence="1" type="primary">rlmH</name>
    <name type="ordered locus">BT_0177</name>
</gene>
<sequence>MQISIFAVGRMKSGAEQKLVQHYLDRFSKSSGAVGFHLKKLQEIPESRAQTACQRMEEEGRKLIEFLPEKCQLIVLDERGESISSAAFAEKLGCYRDEGIRDVIIALGGPDGHNEQIRNRADFLLSFGFMTWPHQIARILLTEQLYRAVTIANHHPYHRF</sequence>
<name>RLMH_BART1</name>
<organism>
    <name type="scientific">Bartonella tribocorum (strain CIP 105476 / IBS 506)</name>
    <dbReference type="NCBI Taxonomy" id="382640"/>
    <lineage>
        <taxon>Bacteria</taxon>
        <taxon>Pseudomonadati</taxon>
        <taxon>Pseudomonadota</taxon>
        <taxon>Alphaproteobacteria</taxon>
        <taxon>Hyphomicrobiales</taxon>
        <taxon>Bartonellaceae</taxon>
        <taxon>Bartonella</taxon>
    </lineage>
</organism>
<comment type="function">
    <text evidence="1">Specifically methylates the pseudouridine at position 1915 (m3Psi1915) in 23S rRNA.</text>
</comment>
<comment type="catalytic activity">
    <reaction evidence="1">
        <text>pseudouridine(1915) in 23S rRNA + S-adenosyl-L-methionine = N(3)-methylpseudouridine(1915) in 23S rRNA + S-adenosyl-L-homocysteine + H(+)</text>
        <dbReference type="Rhea" id="RHEA:42752"/>
        <dbReference type="Rhea" id="RHEA-COMP:10221"/>
        <dbReference type="Rhea" id="RHEA-COMP:10222"/>
        <dbReference type="ChEBI" id="CHEBI:15378"/>
        <dbReference type="ChEBI" id="CHEBI:57856"/>
        <dbReference type="ChEBI" id="CHEBI:59789"/>
        <dbReference type="ChEBI" id="CHEBI:65314"/>
        <dbReference type="ChEBI" id="CHEBI:74486"/>
        <dbReference type="EC" id="2.1.1.177"/>
    </reaction>
</comment>
<comment type="subunit">
    <text evidence="1">Homodimer.</text>
</comment>
<comment type="subcellular location">
    <subcellularLocation>
        <location evidence="1">Cytoplasm</location>
    </subcellularLocation>
</comment>
<comment type="similarity">
    <text evidence="1">Belongs to the RNA methyltransferase RlmH family.</text>
</comment>
<keyword id="KW-0963">Cytoplasm</keyword>
<keyword id="KW-0489">Methyltransferase</keyword>
<keyword id="KW-0698">rRNA processing</keyword>
<keyword id="KW-0949">S-adenosyl-L-methionine</keyword>
<keyword id="KW-0808">Transferase</keyword>
<proteinExistence type="inferred from homology"/>
<evidence type="ECO:0000255" key="1">
    <source>
        <dbReference type="HAMAP-Rule" id="MF_00658"/>
    </source>
</evidence>
<accession>A9IMC0</accession>
<dbReference type="EC" id="2.1.1.177" evidence="1"/>
<dbReference type="EMBL" id="AM260525">
    <property type="protein sequence ID" value="CAK00661.1"/>
    <property type="molecule type" value="Genomic_DNA"/>
</dbReference>
<dbReference type="RefSeq" id="WP_012230528.1">
    <property type="nucleotide sequence ID" value="NC_010161.1"/>
</dbReference>
<dbReference type="SMR" id="A9IMC0"/>
<dbReference type="KEGG" id="btr:BT_0177"/>
<dbReference type="eggNOG" id="COG1576">
    <property type="taxonomic scope" value="Bacteria"/>
</dbReference>
<dbReference type="HOGENOM" id="CLU_100552_1_1_5"/>
<dbReference type="Proteomes" id="UP000001592">
    <property type="component" value="Chromosome"/>
</dbReference>
<dbReference type="GO" id="GO:0005737">
    <property type="term" value="C:cytoplasm"/>
    <property type="evidence" value="ECO:0007669"/>
    <property type="project" value="UniProtKB-SubCell"/>
</dbReference>
<dbReference type="GO" id="GO:0070038">
    <property type="term" value="F:rRNA (pseudouridine-N3-)-methyltransferase activity"/>
    <property type="evidence" value="ECO:0007669"/>
    <property type="project" value="UniProtKB-UniRule"/>
</dbReference>
<dbReference type="CDD" id="cd18081">
    <property type="entry name" value="RlmH-like"/>
    <property type="match status" value="1"/>
</dbReference>
<dbReference type="Gene3D" id="3.40.1280.10">
    <property type="match status" value="1"/>
</dbReference>
<dbReference type="HAMAP" id="MF_00658">
    <property type="entry name" value="23SrRNA_methyltr_H"/>
    <property type="match status" value="1"/>
</dbReference>
<dbReference type="InterPro" id="IPR029028">
    <property type="entry name" value="Alpha/beta_knot_MTases"/>
</dbReference>
<dbReference type="InterPro" id="IPR003742">
    <property type="entry name" value="RlmH-like"/>
</dbReference>
<dbReference type="InterPro" id="IPR029026">
    <property type="entry name" value="tRNA_m1G_MTases_N"/>
</dbReference>
<dbReference type="NCBIfam" id="NF000989">
    <property type="entry name" value="PRK00103.2-3"/>
    <property type="match status" value="1"/>
</dbReference>
<dbReference type="PANTHER" id="PTHR33603">
    <property type="entry name" value="METHYLTRANSFERASE"/>
    <property type="match status" value="1"/>
</dbReference>
<dbReference type="PANTHER" id="PTHR33603:SF1">
    <property type="entry name" value="RIBOSOMAL RNA LARGE SUBUNIT METHYLTRANSFERASE H"/>
    <property type="match status" value="1"/>
</dbReference>
<dbReference type="Pfam" id="PF02590">
    <property type="entry name" value="SPOUT_MTase"/>
    <property type="match status" value="1"/>
</dbReference>
<dbReference type="PIRSF" id="PIRSF004505">
    <property type="entry name" value="MT_bac"/>
    <property type="match status" value="1"/>
</dbReference>
<dbReference type="SUPFAM" id="SSF75217">
    <property type="entry name" value="alpha/beta knot"/>
    <property type="match status" value="1"/>
</dbReference>